<keyword id="KW-0963">Cytoplasm</keyword>
<keyword id="KW-0227">DNA damage</keyword>
<keyword id="KW-0233">DNA recombination</keyword>
<keyword id="KW-0234">DNA repair</keyword>
<keyword id="KW-0238">DNA-binding</keyword>
<keyword id="KW-0255">Endonuclease</keyword>
<keyword id="KW-0378">Hydrolase</keyword>
<keyword id="KW-0460">Magnesium</keyword>
<keyword id="KW-0479">Metal-binding</keyword>
<keyword id="KW-0540">Nuclease</keyword>
<keyword id="KW-1185">Reference proteome</keyword>
<accession>Q7VBE8</accession>
<gene>
    <name evidence="1" type="primary">ruvC</name>
    <name type="ordered locus">Pro_1147</name>
</gene>
<comment type="function">
    <text evidence="1">The RuvA-RuvB-RuvC complex processes Holliday junction (HJ) DNA during genetic recombination and DNA repair. Endonuclease that resolves HJ intermediates. Cleaves cruciform DNA by making single-stranded nicks across the HJ at symmetrical positions within the homologous arms, yielding a 5'-phosphate and a 3'-hydroxyl group; requires a central core of homology in the junction. The consensus cleavage sequence is 5'-(A/T)TT(C/G)-3'. Cleavage occurs on the 3'-side of the TT dinucleotide at the point of strand exchange. HJ branch migration catalyzed by RuvA-RuvB allows RuvC to scan DNA until it finds its consensus sequence, where it cleaves and resolves the cruciform DNA.</text>
</comment>
<comment type="catalytic activity">
    <reaction evidence="1">
        <text>Endonucleolytic cleavage at a junction such as a reciprocal single-stranded crossover between two homologous DNA duplexes (Holliday junction).</text>
        <dbReference type="EC" id="3.1.21.10"/>
    </reaction>
</comment>
<comment type="cofactor">
    <cofactor evidence="1">
        <name>Mg(2+)</name>
        <dbReference type="ChEBI" id="CHEBI:18420"/>
    </cofactor>
    <text evidence="1">Binds 2 Mg(2+) ion per subunit.</text>
</comment>
<comment type="subunit">
    <text evidence="1">Homodimer which binds Holliday junction (HJ) DNA. The HJ becomes 2-fold symmetrical on binding to RuvC with unstacked arms; it has a different conformation from HJ DNA in complex with RuvA. In the full resolvosome a probable DNA-RuvA(4)-RuvB(12)-RuvC(2) complex forms which resolves the HJ.</text>
</comment>
<comment type="subcellular location">
    <subcellularLocation>
        <location evidence="1">Cytoplasm</location>
    </subcellularLocation>
</comment>
<comment type="similarity">
    <text evidence="1">Belongs to the RuvC family.</text>
</comment>
<proteinExistence type="inferred from homology"/>
<name>RUVC_PROMA</name>
<organism>
    <name type="scientific">Prochlorococcus marinus (strain SARG / CCMP1375 / SS120)</name>
    <dbReference type="NCBI Taxonomy" id="167539"/>
    <lineage>
        <taxon>Bacteria</taxon>
        <taxon>Bacillati</taxon>
        <taxon>Cyanobacteriota</taxon>
        <taxon>Cyanophyceae</taxon>
        <taxon>Synechococcales</taxon>
        <taxon>Prochlorococcaceae</taxon>
        <taxon>Prochlorococcus</taxon>
    </lineage>
</organism>
<dbReference type="EC" id="3.1.21.10" evidence="1"/>
<dbReference type="EMBL" id="AE017126">
    <property type="protein sequence ID" value="AAQ00192.1"/>
    <property type="molecule type" value="Genomic_DNA"/>
</dbReference>
<dbReference type="RefSeq" id="NP_875539.1">
    <property type="nucleotide sequence ID" value="NC_005042.1"/>
</dbReference>
<dbReference type="RefSeq" id="WP_011125299.1">
    <property type="nucleotide sequence ID" value="NC_005042.1"/>
</dbReference>
<dbReference type="SMR" id="Q7VBE8"/>
<dbReference type="STRING" id="167539.Pro_1147"/>
<dbReference type="EnsemblBacteria" id="AAQ00192">
    <property type="protein sequence ID" value="AAQ00192"/>
    <property type="gene ID" value="Pro_1147"/>
</dbReference>
<dbReference type="KEGG" id="pma:Pro_1147"/>
<dbReference type="PATRIC" id="fig|167539.5.peg.1200"/>
<dbReference type="eggNOG" id="COG0817">
    <property type="taxonomic scope" value="Bacteria"/>
</dbReference>
<dbReference type="HOGENOM" id="CLU_091257_3_1_3"/>
<dbReference type="OrthoDB" id="9805499at2"/>
<dbReference type="Proteomes" id="UP000001420">
    <property type="component" value="Chromosome"/>
</dbReference>
<dbReference type="GO" id="GO:0005737">
    <property type="term" value="C:cytoplasm"/>
    <property type="evidence" value="ECO:0007669"/>
    <property type="project" value="UniProtKB-SubCell"/>
</dbReference>
<dbReference type="GO" id="GO:0048476">
    <property type="term" value="C:Holliday junction resolvase complex"/>
    <property type="evidence" value="ECO:0007669"/>
    <property type="project" value="UniProtKB-UniRule"/>
</dbReference>
<dbReference type="GO" id="GO:0008821">
    <property type="term" value="F:crossover junction DNA endonuclease activity"/>
    <property type="evidence" value="ECO:0007669"/>
    <property type="project" value="UniProtKB-UniRule"/>
</dbReference>
<dbReference type="GO" id="GO:0003677">
    <property type="term" value="F:DNA binding"/>
    <property type="evidence" value="ECO:0007669"/>
    <property type="project" value="UniProtKB-KW"/>
</dbReference>
<dbReference type="GO" id="GO:0000287">
    <property type="term" value="F:magnesium ion binding"/>
    <property type="evidence" value="ECO:0007669"/>
    <property type="project" value="UniProtKB-UniRule"/>
</dbReference>
<dbReference type="GO" id="GO:0006310">
    <property type="term" value="P:DNA recombination"/>
    <property type="evidence" value="ECO:0007669"/>
    <property type="project" value="UniProtKB-UniRule"/>
</dbReference>
<dbReference type="GO" id="GO:0006281">
    <property type="term" value="P:DNA repair"/>
    <property type="evidence" value="ECO:0007669"/>
    <property type="project" value="UniProtKB-UniRule"/>
</dbReference>
<dbReference type="CDD" id="cd16962">
    <property type="entry name" value="RuvC"/>
    <property type="match status" value="1"/>
</dbReference>
<dbReference type="FunFam" id="3.30.420.10:FF:000002">
    <property type="entry name" value="Crossover junction endodeoxyribonuclease RuvC"/>
    <property type="match status" value="1"/>
</dbReference>
<dbReference type="Gene3D" id="3.30.420.10">
    <property type="entry name" value="Ribonuclease H-like superfamily/Ribonuclease H"/>
    <property type="match status" value="1"/>
</dbReference>
<dbReference type="HAMAP" id="MF_00034">
    <property type="entry name" value="RuvC"/>
    <property type="match status" value="1"/>
</dbReference>
<dbReference type="InterPro" id="IPR012337">
    <property type="entry name" value="RNaseH-like_sf"/>
</dbReference>
<dbReference type="InterPro" id="IPR036397">
    <property type="entry name" value="RNaseH_sf"/>
</dbReference>
<dbReference type="InterPro" id="IPR020563">
    <property type="entry name" value="X-over_junc_endoDNase_Mg_BS"/>
</dbReference>
<dbReference type="InterPro" id="IPR002176">
    <property type="entry name" value="X-over_junc_endoDNase_RuvC"/>
</dbReference>
<dbReference type="NCBIfam" id="NF000711">
    <property type="entry name" value="PRK00039.2-1"/>
    <property type="match status" value="1"/>
</dbReference>
<dbReference type="PANTHER" id="PTHR30194">
    <property type="entry name" value="CROSSOVER JUNCTION ENDODEOXYRIBONUCLEASE RUVC"/>
    <property type="match status" value="1"/>
</dbReference>
<dbReference type="PANTHER" id="PTHR30194:SF3">
    <property type="entry name" value="CROSSOVER JUNCTION ENDODEOXYRIBONUCLEASE RUVC"/>
    <property type="match status" value="1"/>
</dbReference>
<dbReference type="Pfam" id="PF02075">
    <property type="entry name" value="RuvC"/>
    <property type="match status" value="1"/>
</dbReference>
<dbReference type="PRINTS" id="PR00696">
    <property type="entry name" value="RSOLVASERUVC"/>
</dbReference>
<dbReference type="SUPFAM" id="SSF53098">
    <property type="entry name" value="Ribonuclease H-like"/>
    <property type="match status" value="1"/>
</dbReference>
<dbReference type="PROSITE" id="PS01321">
    <property type="entry name" value="RUVC"/>
    <property type="match status" value="1"/>
</dbReference>
<feature type="chain" id="PRO_0000183118" description="Crossover junction endodeoxyribonuclease RuvC">
    <location>
        <begin position="1"/>
        <end position="155"/>
    </location>
</feature>
<feature type="active site" evidence="1">
    <location>
        <position position="7"/>
    </location>
</feature>
<feature type="active site" evidence="1">
    <location>
        <position position="68"/>
    </location>
</feature>
<feature type="active site" evidence="1">
    <location>
        <position position="140"/>
    </location>
</feature>
<feature type="binding site" evidence="1">
    <location>
        <position position="7"/>
    </location>
    <ligand>
        <name>Mg(2+)</name>
        <dbReference type="ChEBI" id="CHEBI:18420"/>
        <label>1</label>
    </ligand>
</feature>
<feature type="binding site" evidence="1">
    <location>
        <position position="68"/>
    </location>
    <ligand>
        <name>Mg(2+)</name>
        <dbReference type="ChEBI" id="CHEBI:18420"/>
        <label>2</label>
    </ligand>
</feature>
<feature type="binding site" evidence="1">
    <location>
        <position position="140"/>
    </location>
    <ligand>
        <name>Mg(2+)</name>
        <dbReference type="ChEBI" id="CHEBI:18420"/>
        <label>1</label>
    </ligand>
</feature>
<sequence length="155" mass="17232">MVILGIDPGLARVGYGLIEVNNQRQVKMLDCGIIKTNKNQYEGERMVEIAKDLRVLIRKWKPGLAAVEKFFFYKSSTTISVVQARGVLIMTLARFKVPIVEFPPMQIKLAVAGSGHAKKDEVLEAVMRELRLKVPPRPDDAADALAIALTGLFQQ</sequence>
<protein>
    <recommendedName>
        <fullName evidence="1">Crossover junction endodeoxyribonuclease RuvC</fullName>
        <ecNumber evidence="1">3.1.21.10</ecNumber>
    </recommendedName>
    <alternativeName>
        <fullName evidence="1">Holliday junction nuclease RuvC</fullName>
    </alternativeName>
    <alternativeName>
        <fullName evidence="1">Holliday junction resolvase RuvC</fullName>
    </alternativeName>
</protein>
<evidence type="ECO:0000255" key="1">
    <source>
        <dbReference type="HAMAP-Rule" id="MF_00034"/>
    </source>
</evidence>
<reference key="1">
    <citation type="journal article" date="2003" name="Proc. Natl. Acad. Sci. U.S.A.">
        <title>Genome sequence of the cyanobacterium Prochlorococcus marinus SS120, a nearly minimal oxyphototrophic genome.</title>
        <authorList>
            <person name="Dufresne A."/>
            <person name="Salanoubat M."/>
            <person name="Partensky F."/>
            <person name="Artiguenave F."/>
            <person name="Axmann I.M."/>
            <person name="Barbe V."/>
            <person name="Duprat S."/>
            <person name="Galperin M.Y."/>
            <person name="Koonin E.V."/>
            <person name="Le Gall F."/>
            <person name="Makarova K.S."/>
            <person name="Ostrowski M."/>
            <person name="Oztas S."/>
            <person name="Robert C."/>
            <person name="Rogozin I.B."/>
            <person name="Scanlan D.J."/>
            <person name="Tandeau de Marsac N."/>
            <person name="Weissenbach J."/>
            <person name="Wincker P."/>
            <person name="Wolf Y.I."/>
            <person name="Hess W.R."/>
        </authorList>
    </citation>
    <scope>NUCLEOTIDE SEQUENCE [LARGE SCALE GENOMIC DNA]</scope>
    <source>
        <strain>SARG / CCMP1375 / SS120</strain>
    </source>
</reference>